<gene>
    <name type="primary">GART</name>
</gene>
<reference key="1">
    <citation type="journal article" date="1990" name="J. Biol. Chem.">
        <title>Cloning of a cDNA encoding adenylosuccinate lyase by functional complementation in Escherichia coli.</title>
        <authorList>
            <person name="Aimi J."/>
            <person name="Badylak J."/>
            <person name="Williams J."/>
            <person name="Chen Z."/>
            <person name="Zalkin H."/>
            <person name="Dixon J.E."/>
        </authorList>
    </citation>
    <scope>NUCLEOTIDE SEQUENCE [MRNA]</scope>
    <source>
        <tissue>Liver</tissue>
    </source>
</reference>
<reference key="2">
    <citation type="journal article" date="1990" name="Nucleic Acids Res.">
        <title>De novo purine nucleotide biosynthesis: cloning of human and avian cDNAs encoding the trifunctional glycinamide ribonucleotide synthetase-aminoimidazole ribonucleotide synthetase-glycinamide ribonucleotide transformylase by functional complementation in E. coli.</title>
        <authorList>
            <person name="Aimi J."/>
            <person name="Qiu H."/>
            <person name="Williams J."/>
            <person name="Zalkin H."/>
            <person name="Dixon J.E."/>
        </authorList>
    </citation>
    <scope>NUCLEOTIDE SEQUENCE [MRNA]</scope>
    <scope>ALTERNATIVE SPLICING</scope>
    <scope>FUNCTION</scope>
    <scope>CATALYTIC ACTIVITY</scope>
    <scope>PATHWAY</scope>
    <scope>DOMAIN</scope>
    <scope>REGION</scope>
    <source>
        <tissue>Liver</tissue>
    </source>
</reference>
<sequence>MADRVLVIGSGGREHALAWKLAQSPHVKQVFVAPGNAGTANSGKISNSAVSVSNHAALAQFCRDQEIRLVVVGPEVPLAAGIVDDLTAAGVRCFGPTARAAQLESSKSFTKSFLDRHGIPTARWKSFTDPKAACSFINSANFPALVVKASGLAAGKGVIVASNKEEACKAVNDIMQDKTFGTAGETVVVEELLEGEEVSCLCFTDGVTIAPMPPAQDHKRLKDGDEGPNTGGMGAYSPAPQISKDLLLKIRETVLQKTLDGMRKEGIPYLGVLYAGLMLTKDGPKVLEFNCRFGDPECQVILPLLKSDLYEVMQAVINKKLSSSMPIWYEDSAAVTVVMASEGYPGTYPKGLEITGLSKAKELGLEVFHAGTALKDGKVVTNGGRVLTVTAIKEDLMTALQEANKGVAAINFKGSIYRKDIGYRAIAFLSQSRGLTYKNSGVDIAAGNILVQKIKPLAAATSRSGCNAELGGFAGLFDLKAAGYKDPILVSGTDGVGTKLKIAQVCKKHDTIGQDLVAMCVNDILAQGAEPLFFLDYFACGKLDVEVAQGVIAGIAEACQKAGCALLGGETAEMPGMYPPGEYDLAGFAVGAVERGQMLPQLERIADGDVVIGVASSGVHSNGYSLVRRIVEKSSLDFSSQVGVSGDQTLGDLLLTPTKIYSKTLLPVLRSGHVKAYAHITGGGLLENIPRVLPDSFGVVLDALSWKIPEIFCWLHKEGNLSEEEMARTFNCGIGAVLVVQKELAQQVLKDVQKHEAAWLIGKVVPLQKGSAHVKVHNLLQALQANRSLSVHSHIQGKIQTNKVKVAVLISGTGTNLEALINSTKKPTSFAEIVLVVSNKAGVEGLRKAERAGIPTRVIDHKQYGSRTEFDSAVDRVLEEFSVELICLAGFMRILSGPFVKKWEGKILNIHPSLLPSFKGANAHKLVLEAGVRVTGCTVHFVAEEVDAGAIIFQEAVPVKIGDTVETLSERVKEAEHRAFPAALQLVASGAVQVGEAGKICWK</sequence>
<accession>P21872</accession>
<protein>
    <recommendedName>
        <fullName evidence="7">Trifunctional purine biosynthetic protein adenosine-3</fullName>
    </recommendedName>
    <domain>
        <recommendedName>
            <fullName evidence="7">Phosphoribosylamine--glycine ligase</fullName>
            <ecNumber evidence="7">6.3.4.13</ecNumber>
        </recommendedName>
        <alternativeName>
            <fullName>Glycinamide ribonucleotide synthetase</fullName>
            <shortName>GARS</shortName>
        </alternativeName>
        <alternativeName>
            <fullName>Phosphoribosylglycinamide synthetase</fullName>
        </alternativeName>
    </domain>
    <domain>
        <recommendedName>
            <fullName evidence="7">Phosphoribosylformylglycinamidine cyclo-ligase</fullName>
            <ecNumber evidence="7">6.3.3.1</ecNumber>
        </recommendedName>
        <alternativeName>
            <fullName>AIR synthase</fullName>
            <shortName>AIRS</shortName>
        </alternativeName>
        <alternativeName>
            <fullName>Phosphoribosyl-aminoimidazole synthetase</fullName>
        </alternativeName>
    </domain>
    <domain>
        <recommendedName>
            <fullName evidence="7">Phosphoribosylglycinamide formyltransferase</fullName>
            <ecNumber evidence="7">2.1.2.2</ecNumber>
        </recommendedName>
        <alternativeName>
            <fullName>5'-phosphoribosylglycinamide transformylase</fullName>
        </alternativeName>
        <alternativeName>
            <fullName>GAR transformylase</fullName>
            <shortName>GART</shortName>
        </alternativeName>
    </domain>
</protein>
<name>PUR2_CHICK</name>
<comment type="function">
    <text evidence="7">Trifunctional enzyme that catalyzes three distinct reactions as part of the 'de novo' inosine monophosphate biosynthetic pathway.</text>
</comment>
<comment type="catalytic activity">
    <reaction evidence="7">
        <text>5-phospho-beta-D-ribosylamine + glycine + ATP = N(1)-(5-phospho-beta-D-ribosyl)glycinamide + ADP + phosphate + H(+)</text>
        <dbReference type="Rhea" id="RHEA:17453"/>
        <dbReference type="ChEBI" id="CHEBI:15378"/>
        <dbReference type="ChEBI" id="CHEBI:30616"/>
        <dbReference type="ChEBI" id="CHEBI:43474"/>
        <dbReference type="ChEBI" id="CHEBI:57305"/>
        <dbReference type="ChEBI" id="CHEBI:58681"/>
        <dbReference type="ChEBI" id="CHEBI:143788"/>
        <dbReference type="ChEBI" id="CHEBI:456216"/>
        <dbReference type="EC" id="6.3.4.13"/>
    </reaction>
    <physiologicalReaction direction="left-to-right" evidence="7">
        <dbReference type="Rhea" id="RHEA:17454"/>
    </physiologicalReaction>
</comment>
<comment type="catalytic activity">
    <reaction evidence="7">
        <text>2-formamido-N(1)-(5-O-phospho-beta-D-ribosyl)acetamidine + ATP = 5-amino-1-(5-phospho-beta-D-ribosyl)imidazole + ADP + phosphate + H(+)</text>
        <dbReference type="Rhea" id="RHEA:23032"/>
        <dbReference type="ChEBI" id="CHEBI:15378"/>
        <dbReference type="ChEBI" id="CHEBI:30616"/>
        <dbReference type="ChEBI" id="CHEBI:43474"/>
        <dbReference type="ChEBI" id="CHEBI:137981"/>
        <dbReference type="ChEBI" id="CHEBI:147287"/>
        <dbReference type="ChEBI" id="CHEBI:456216"/>
        <dbReference type="EC" id="6.3.3.1"/>
    </reaction>
    <physiologicalReaction direction="left-to-right" evidence="7">
        <dbReference type="Rhea" id="RHEA:23033"/>
    </physiologicalReaction>
</comment>
<comment type="catalytic activity">
    <reaction evidence="7">
        <text>N(1)-(5-phospho-beta-D-ribosyl)glycinamide + (6R)-10-formyltetrahydrofolate = N(2)-formyl-N(1)-(5-phospho-beta-D-ribosyl)glycinamide + (6S)-5,6,7,8-tetrahydrofolate + H(+)</text>
        <dbReference type="Rhea" id="RHEA:15053"/>
        <dbReference type="ChEBI" id="CHEBI:15378"/>
        <dbReference type="ChEBI" id="CHEBI:57453"/>
        <dbReference type="ChEBI" id="CHEBI:143788"/>
        <dbReference type="ChEBI" id="CHEBI:147286"/>
        <dbReference type="ChEBI" id="CHEBI:195366"/>
        <dbReference type="EC" id="2.1.2.2"/>
    </reaction>
    <physiologicalReaction direction="left-to-right" evidence="7">
        <dbReference type="Rhea" id="RHEA:15054"/>
    </physiologicalReaction>
</comment>
<comment type="cofactor">
    <cofactor evidence="2 4">
        <name>Mg(2+)</name>
        <dbReference type="ChEBI" id="CHEBI:18420"/>
    </cofactor>
    <cofactor evidence="4">
        <name>Mn(2+)</name>
        <dbReference type="ChEBI" id="CHEBI:29035"/>
    </cofactor>
    <text evidence="4">Binds 1 magnesium or manganese ion per subunit.</text>
</comment>
<comment type="pathway">
    <text evidence="7">Purine metabolism; IMP biosynthesis via de novo pathway; 5-amino-1-(5-phospho-D-ribosyl)imidazole from N(2)-formyl-N(1)-(5-phospho-D-ribosyl)glycinamide: step 2/2.</text>
</comment>
<comment type="pathway">
    <text evidence="7">Purine metabolism; IMP biosynthesis via de novo pathway; N(1)-(5-phospho-D-ribosyl)glycinamide from 5-phospho-alpha-D-ribose 1-diphosphate: step 2/2.</text>
</comment>
<comment type="pathway">
    <text evidence="7">Purine metabolism; IMP biosynthesis via de novo pathway; N(2)-formyl-N(1)-(5-phospho-D-ribosyl)glycinamide from N(1)-(5-phospho-D-ribosyl)glycinamide (10-formyl THF route): step 1/1.</text>
</comment>
<comment type="subunit">
    <text evidence="3">Homodimer.</text>
</comment>
<comment type="alternative products">
    <event type="alternative splicing"/>
    <isoform>
        <id>P21872-1</id>
        <name>Long</name>
        <sequence type="displayed"/>
    </isoform>
    <isoform>
        <id>P21872-2</id>
        <name>Short</name>
        <sequence type="described" ref="VSP_005516"/>
    </isoform>
</comment>
<comment type="domain">
    <text evidence="7">The N-terminal ATP-grasp domain carries the phosphoribosylamine--glycine ligase activity.</text>
</comment>
<comment type="domain">
    <text evidence="7">The central AIRS domain carries the phosphoribosylformylglycinamidine cyclo-ligase activity.</text>
</comment>
<comment type="domain">
    <text evidence="7">The C-terminal GART domain carries the phosphoribosylglycinamide formyltransferase activity.</text>
</comment>
<comment type="similarity">
    <text evidence="6">In the N-terminal section; belongs to the GARS family.</text>
</comment>
<comment type="similarity">
    <text evidence="6">In the central section; belongs to the AIR synthase family.</text>
</comment>
<comment type="similarity">
    <text evidence="6">In the C-terminal section; belongs to the GART family.</text>
</comment>
<proteinExistence type="evidence at protein level"/>
<feature type="chain" id="PRO_0000074936" description="Trifunctional purine biosynthetic protein adenosine-3">
    <location>
        <begin position="1"/>
        <end position="1003"/>
    </location>
</feature>
<feature type="domain" description="ATP-grasp" evidence="4">
    <location>
        <begin position="111"/>
        <end position="318"/>
    </location>
</feature>
<feature type="region of interest" description="Disordered" evidence="5">
    <location>
        <begin position="214"/>
        <end position="235"/>
    </location>
</feature>
<feature type="region of interest" description="AIRS domain" evidence="7">
    <location>
        <begin position="434"/>
        <end position="805"/>
    </location>
</feature>
<feature type="region of interest" description="GART domain" evidence="7">
    <location>
        <begin position="806"/>
        <end position="1003"/>
    </location>
</feature>
<feature type="compositionally biased region" description="Basic and acidic residues" evidence="5">
    <location>
        <begin position="216"/>
        <end position="225"/>
    </location>
</feature>
<feature type="active site" description="Proton donor" evidence="1">
    <location>
        <position position="911"/>
    </location>
</feature>
<feature type="binding site" evidence="3">
    <location>
        <begin position="190"/>
        <end position="193"/>
    </location>
    <ligand>
        <name>ATP</name>
        <dbReference type="ChEBI" id="CHEBI:30616"/>
    </ligand>
</feature>
<feature type="binding site" evidence="3">
    <location>
        <position position="197"/>
    </location>
    <ligand>
        <name>ATP</name>
        <dbReference type="ChEBI" id="CHEBI:30616"/>
    </ligand>
</feature>
<feature type="binding site" evidence="3">
    <location>
        <position position="220"/>
    </location>
    <ligand>
        <name>ATP</name>
        <dbReference type="ChEBI" id="CHEBI:30616"/>
    </ligand>
</feature>
<feature type="binding site" evidence="3">
    <location>
        <position position="229"/>
    </location>
    <ligand>
        <name>ATP</name>
        <dbReference type="ChEBI" id="CHEBI:30616"/>
    </ligand>
</feature>
<feature type="binding site" evidence="4">
    <location>
        <position position="288"/>
    </location>
    <ligand>
        <name>Mg(2+)</name>
        <dbReference type="ChEBI" id="CHEBI:18420"/>
    </ligand>
</feature>
<feature type="binding site" evidence="4">
    <location>
        <position position="290"/>
    </location>
    <ligand>
        <name>Mg(2+)</name>
        <dbReference type="ChEBI" id="CHEBI:18420"/>
    </ligand>
</feature>
<feature type="binding site" evidence="3">
    <location>
        <begin position="814"/>
        <end position="816"/>
    </location>
    <ligand>
        <name>N(1)-(5-phospho-beta-D-ribosyl)glycinamide</name>
        <dbReference type="ChEBI" id="CHEBI:143788"/>
    </ligand>
</feature>
<feature type="binding site" evidence="3">
    <location>
        <position position="867"/>
    </location>
    <ligand>
        <name>(6R)-10-formyltetrahydrofolate</name>
        <dbReference type="ChEBI" id="CHEBI:195366"/>
    </ligand>
</feature>
<feature type="binding site" evidence="3">
    <location>
        <begin position="892"/>
        <end position="895"/>
    </location>
    <ligand>
        <name>(6R)-10-formyltetrahydrofolate</name>
        <dbReference type="ChEBI" id="CHEBI:195366"/>
    </ligand>
</feature>
<feature type="binding site" evidence="3">
    <location>
        <position position="909"/>
    </location>
    <ligand>
        <name>(6R)-10-formyltetrahydrofolate</name>
        <dbReference type="ChEBI" id="CHEBI:195366"/>
    </ligand>
</feature>
<feature type="binding site" evidence="3">
    <location>
        <begin position="943"/>
        <end position="947"/>
    </location>
    <ligand>
        <name>(6R)-10-formyltetrahydrofolate</name>
        <dbReference type="ChEBI" id="CHEBI:195366"/>
    </ligand>
</feature>
<feature type="binding site" evidence="3">
    <location>
        <begin position="973"/>
        <end position="976"/>
    </location>
    <ligand>
        <name>N(1)-(5-phospho-beta-D-ribosyl)glycinamide</name>
        <dbReference type="ChEBI" id="CHEBI:143788"/>
    </ligand>
</feature>
<feature type="site" description="Raises pKa of active site His" evidence="1">
    <location>
        <position position="947"/>
    </location>
</feature>
<feature type="splice variant" id="VSP_005516" description="In isoform Short." evidence="6">
    <location>
        <begin position="434"/>
        <end position="1003"/>
    </location>
</feature>
<organism>
    <name type="scientific">Gallus gallus</name>
    <name type="common">Chicken</name>
    <dbReference type="NCBI Taxonomy" id="9031"/>
    <lineage>
        <taxon>Eukaryota</taxon>
        <taxon>Metazoa</taxon>
        <taxon>Chordata</taxon>
        <taxon>Craniata</taxon>
        <taxon>Vertebrata</taxon>
        <taxon>Euteleostomi</taxon>
        <taxon>Archelosauria</taxon>
        <taxon>Archosauria</taxon>
        <taxon>Dinosauria</taxon>
        <taxon>Saurischia</taxon>
        <taxon>Theropoda</taxon>
        <taxon>Coelurosauria</taxon>
        <taxon>Aves</taxon>
        <taxon>Neognathae</taxon>
        <taxon>Galloanserae</taxon>
        <taxon>Galliformes</taxon>
        <taxon>Phasianidae</taxon>
        <taxon>Phasianinae</taxon>
        <taxon>Gallus</taxon>
    </lineage>
</organism>
<keyword id="KW-0025">Alternative splicing</keyword>
<keyword id="KW-0067">ATP-binding</keyword>
<keyword id="KW-0436">Ligase</keyword>
<keyword id="KW-0460">Magnesium</keyword>
<keyword id="KW-0464">Manganese</keyword>
<keyword id="KW-0479">Metal-binding</keyword>
<keyword id="KW-0511">Multifunctional enzyme</keyword>
<keyword id="KW-0547">Nucleotide-binding</keyword>
<keyword id="KW-0658">Purine biosynthesis</keyword>
<keyword id="KW-1185">Reference proteome</keyword>
<keyword id="KW-0808">Transferase</keyword>
<dbReference type="EC" id="6.3.4.13" evidence="7"/>
<dbReference type="EC" id="6.3.3.1" evidence="7"/>
<dbReference type="EC" id="2.1.2.2" evidence="7"/>
<dbReference type="EMBL" id="X56339">
    <property type="protein sequence ID" value="CAA39779.1"/>
    <property type="molecule type" value="mRNA"/>
</dbReference>
<dbReference type="EMBL" id="X54200">
    <property type="protein sequence ID" value="CAA38120.1"/>
    <property type="molecule type" value="mRNA"/>
</dbReference>
<dbReference type="PIR" id="S12617">
    <property type="entry name" value="AJCHPR"/>
</dbReference>
<dbReference type="RefSeq" id="NP_001001469.1">
    <property type="nucleotide sequence ID" value="NM_001001469.1"/>
</dbReference>
<dbReference type="SMR" id="P21872"/>
<dbReference type="FunCoup" id="P21872">
    <property type="interactions" value="2725"/>
</dbReference>
<dbReference type="STRING" id="9031.ENSGALP00000049365"/>
<dbReference type="PaxDb" id="9031-ENSGALP00000035973"/>
<dbReference type="GeneID" id="395315"/>
<dbReference type="KEGG" id="gga:395315"/>
<dbReference type="CTD" id="2618"/>
<dbReference type="VEuPathDB" id="HostDB:geneid_395315"/>
<dbReference type="eggNOG" id="KOG0237">
    <property type="taxonomic scope" value="Eukaryota"/>
</dbReference>
<dbReference type="eggNOG" id="KOG3076">
    <property type="taxonomic scope" value="Eukaryota"/>
</dbReference>
<dbReference type="InParanoid" id="P21872"/>
<dbReference type="OrthoDB" id="2018833at2759"/>
<dbReference type="PhylomeDB" id="P21872"/>
<dbReference type="Reactome" id="R-GGA-419140">
    <property type="pathway name" value="De novo synthesis of IMP"/>
</dbReference>
<dbReference type="UniPathway" id="UPA00074">
    <property type="reaction ID" value="UER00125"/>
</dbReference>
<dbReference type="UniPathway" id="UPA00074">
    <property type="reaction ID" value="UER00126"/>
</dbReference>
<dbReference type="UniPathway" id="UPA00074">
    <property type="reaction ID" value="UER00129"/>
</dbReference>
<dbReference type="PRO" id="PR:P21872"/>
<dbReference type="Proteomes" id="UP000000539">
    <property type="component" value="Unassembled WGS sequence"/>
</dbReference>
<dbReference type="GO" id="GO:0005829">
    <property type="term" value="C:cytosol"/>
    <property type="evidence" value="ECO:0000318"/>
    <property type="project" value="GO_Central"/>
</dbReference>
<dbReference type="GO" id="GO:0005524">
    <property type="term" value="F:ATP binding"/>
    <property type="evidence" value="ECO:0007669"/>
    <property type="project" value="UniProtKB-KW"/>
</dbReference>
<dbReference type="GO" id="GO:0046872">
    <property type="term" value="F:metal ion binding"/>
    <property type="evidence" value="ECO:0007669"/>
    <property type="project" value="UniProtKB-KW"/>
</dbReference>
<dbReference type="GO" id="GO:0004637">
    <property type="term" value="F:phosphoribosylamine-glycine ligase activity"/>
    <property type="evidence" value="ECO:0000318"/>
    <property type="project" value="GO_Central"/>
</dbReference>
<dbReference type="GO" id="GO:0004641">
    <property type="term" value="F:phosphoribosylformylglycinamidine cyclo-ligase activity"/>
    <property type="evidence" value="ECO:0000318"/>
    <property type="project" value="GO_Central"/>
</dbReference>
<dbReference type="GO" id="GO:0004644">
    <property type="term" value="F:phosphoribosylglycinamide formyltransferase activity"/>
    <property type="evidence" value="ECO:0000304"/>
    <property type="project" value="Reactome"/>
</dbReference>
<dbReference type="GO" id="GO:0006189">
    <property type="term" value="P:'de novo' IMP biosynthetic process"/>
    <property type="evidence" value="ECO:0000304"/>
    <property type="project" value="Reactome"/>
</dbReference>
<dbReference type="GO" id="GO:0046084">
    <property type="term" value="P:adenine biosynthetic process"/>
    <property type="evidence" value="ECO:0000318"/>
    <property type="project" value="GO_Central"/>
</dbReference>
<dbReference type="GO" id="GO:0006164">
    <property type="term" value="P:purine nucleotide biosynthetic process"/>
    <property type="evidence" value="ECO:0000318"/>
    <property type="project" value="GO_Central"/>
</dbReference>
<dbReference type="CDD" id="cd08645">
    <property type="entry name" value="FMT_core_GART"/>
    <property type="match status" value="1"/>
</dbReference>
<dbReference type="CDD" id="cd02196">
    <property type="entry name" value="PurM"/>
    <property type="match status" value="1"/>
</dbReference>
<dbReference type="FunFam" id="3.40.50.20:FF:000006">
    <property type="entry name" value="Phosphoribosylamine--glycine ligase, chloroplastic"/>
    <property type="match status" value="1"/>
</dbReference>
<dbReference type="FunFam" id="3.30.1490.20:FF:000006">
    <property type="entry name" value="phosphoribosylamine--glycine ligase, chloroplastic-like"/>
    <property type="match status" value="1"/>
</dbReference>
<dbReference type="FunFam" id="3.30.1330.10:FF:000001">
    <property type="entry name" value="Phosphoribosylformylglycinamidine cyclo-ligase"/>
    <property type="match status" value="1"/>
</dbReference>
<dbReference type="FunFam" id="3.30.470.20:FF:000018">
    <property type="entry name" value="Trifunctional purine biosynthetic protein adenosine-3"/>
    <property type="match status" value="1"/>
</dbReference>
<dbReference type="FunFam" id="3.40.50.170:FF:000006">
    <property type="entry name" value="Trifunctional purine biosynthetic protein adenosine-3"/>
    <property type="match status" value="1"/>
</dbReference>
<dbReference type="FunFam" id="3.90.600.10:FF:000001">
    <property type="entry name" value="Trifunctional purine biosynthetic protein adenosine-3"/>
    <property type="match status" value="1"/>
</dbReference>
<dbReference type="FunFam" id="3.90.650.10:FF:000007">
    <property type="entry name" value="Trifunctional purine biosynthetic protein adenosine-3"/>
    <property type="match status" value="1"/>
</dbReference>
<dbReference type="Gene3D" id="3.40.50.20">
    <property type="match status" value="1"/>
</dbReference>
<dbReference type="Gene3D" id="3.30.1490.20">
    <property type="entry name" value="ATP-grasp fold, A domain"/>
    <property type="match status" value="1"/>
</dbReference>
<dbReference type="Gene3D" id="3.30.470.20">
    <property type="entry name" value="ATP-grasp fold, B domain"/>
    <property type="match status" value="1"/>
</dbReference>
<dbReference type="Gene3D" id="3.40.50.170">
    <property type="entry name" value="Formyl transferase, N-terminal domain"/>
    <property type="match status" value="1"/>
</dbReference>
<dbReference type="Gene3D" id="3.90.600.10">
    <property type="entry name" value="Phosphoribosylglycinamide synthetase, C-terminal domain"/>
    <property type="match status" value="1"/>
</dbReference>
<dbReference type="Gene3D" id="3.90.650.10">
    <property type="entry name" value="PurM-like C-terminal domain"/>
    <property type="match status" value="1"/>
</dbReference>
<dbReference type="Gene3D" id="3.30.1330.10">
    <property type="entry name" value="PurM-like, N-terminal domain"/>
    <property type="match status" value="1"/>
</dbReference>
<dbReference type="HAMAP" id="MF_00741">
    <property type="entry name" value="AIRS"/>
    <property type="match status" value="1"/>
</dbReference>
<dbReference type="HAMAP" id="MF_00138">
    <property type="entry name" value="GARS"/>
    <property type="match status" value="1"/>
</dbReference>
<dbReference type="HAMAP" id="MF_01930">
    <property type="entry name" value="PurN"/>
    <property type="match status" value="1"/>
</dbReference>
<dbReference type="InterPro" id="IPR011761">
    <property type="entry name" value="ATP-grasp"/>
</dbReference>
<dbReference type="InterPro" id="IPR013815">
    <property type="entry name" value="ATP_grasp_subdomain_1"/>
</dbReference>
<dbReference type="InterPro" id="IPR002376">
    <property type="entry name" value="Formyl_transf_N"/>
</dbReference>
<dbReference type="InterPro" id="IPR036477">
    <property type="entry name" value="Formyl_transf_N_sf"/>
</dbReference>
<dbReference type="InterPro" id="IPR004607">
    <property type="entry name" value="GART"/>
</dbReference>
<dbReference type="InterPro" id="IPR001555">
    <property type="entry name" value="GART_AS"/>
</dbReference>
<dbReference type="InterPro" id="IPR016185">
    <property type="entry name" value="PreATP-grasp_dom_sf"/>
</dbReference>
<dbReference type="InterPro" id="IPR020561">
    <property type="entry name" value="PRibGlycinamid_synth_ATP-grasp"/>
</dbReference>
<dbReference type="InterPro" id="IPR000115">
    <property type="entry name" value="PRibGlycinamide_synth"/>
</dbReference>
<dbReference type="InterPro" id="IPR020560">
    <property type="entry name" value="PRibGlycinamide_synth_C-dom"/>
</dbReference>
<dbReference type="InterPro" id="IPR037123">
    <property type="entry name" value="PRibGlycinamide_synth_C_sf"/>
</dbReference>
<dbReference type="InterPro" id="IPR020559">
    <property type="entry name" value="PRibGlycinamide_synth_CS"/>
</dbReference>
<dbReference type="InterPro" id="IPR020562">
    <property type="entry name" value="PRibGlycinamide_synth_N"/>
</dbReference>
<dbReference type="InterPro" id="IPR010918">
    <property type="entry name" value="PurM-like_C_dom"/>
</dbReference>
<dbReference type="InterPro" id="IPR036676">
    <property type="entry name" value="PurM-like_C_sf"/>
</dbReference>
<dbReference type="InterPro" id="IPR016188">
    <property type="entry name" value="PurM-like_N"/>
</dbReference>
<dbReference type="InterPro" id="IPR036921">
    <property type="entry name" value="PurM-like_N_sf"/>
</dbReference>
<dbReference type="InterPro" id="IPR004733">
    <property type="entry name" value="PurM_cligase"/>
</dbReference>
<dbReference type="InterPro" id="IPR011054">
    <property type="entry name" value="Rudment_hybrid_motif"/>
</dbReference>
<dbReference type="NCBIfam" id="TIGR00877">
    <property type="entry name" value="purD"/>
    <property type="match status" value="1"/>
</dbReference>
<dbReference type="NCBIfam" id="TIGR00878">
    <property type="entry name" value="purM"/>
    <property type="match status" value="1"/>
</dbReference>
<dbReference type="NCBIfam" id="TIGR00639">
    <property type="entry name" value="PurN"/>
    <property type="match status" value="1"/>
</dbReference>
<dbReference type="PANTHER" id="PTHR10520:SF12">
    <property type="entry name" value="TRIFUNCTIONAL PURINE BIOSYNTHETIC PROTEIN ADENOSINE-3"/>
    <property type="match status" value="1"/>
</dbReference>
<dbReference type="PANTHER" id="PTHR10520">
    <property type="entry name" value="TRIFUNCTIONAL PURINE BIOSYNTHETIC PROTEIN ADENOSINE-3-RELATED"/>
    <property type="match status" value="1"/>
</dbReference>
<dbReference type="Pfam" id="PF00586">
    <property type="entry name" value="AIRS"/>
    <property type="match status" value="1"/>
</dbReference>
<dbReference type="Pfam" id="PF02769">
    <property type="entry name" value="AIRS_C"/>
    <property type="match status" value="1"/>
</dbReference>
<dbReference type="Pfam" id="PF00551">
    <property type="entry name" value="Formyl_trans_N"/>
    <property type="match status" value="1"/>
</dbReference>
<dbReference type="Pfam" id="PF01071">
    <property type="entry name" value="GARS_A"/>
    <property type="match status" value="1"/>
</dbReference>
<dbReference type="Pfam" id="PF02843">
    <property type="entry name" value="GARS_C"/>
    <property type="match status" value="1"/>
</dbReference>
<dbReference type="Pfam" id="PF02844">
    <property type="entry name" value="GARS_N"/>
    <property type="match status" value="1"/>
</dbReference>
<dbReference type="SMART" id="SM01209">
    <property type="entry name" value="GARS_A"/>
    <property type="match status" value="1"/>
</dbReference>
<dbReference type="SMART" id="SM01210">
    <property type="entry name" value="GARS_C"/>
    <property type="match status" value="1"/>
</dbReference>
<dbReference type="SUPFAM" id="SSF53328">
    <property type="entry name" value="Formyltransferase"/>
    <property type="match status" value="1"/>
</dbReference>
<dbReference type="SUPFAM" id="SSF56059">
    <property type="entry name" value="Glutathione synthetase ATP-binding domain-like"/>
    <property type="match status" value="1"/>
</dbReference>
<dbReference type="SUPFAM" id="SSF52440">
    <property type="entry name" value="PreATP-grasp domain"/>
    <property type="match status" value="1"/>
</dbReference>
<dbReference type="SUPFAM" id="SSF56042">
    <property type="entry name" value="PurM C-terminal domain-like"/>
    <property type="match status" value="1"/>
</dbReference>
<dbReference type="SUPFAM" id="SSF55326">
    <property type="entry name" value="PurM N-terminal domain-like"/>
    <property type="match status" value="1"/>
</dbReference>
<dbReference type="SUPFAM" id="SSF51246">
    <property type="entry name" value="Rudiment single hybrid motif"/>
    <property type="match status" value="1"/>
</dbReference>
<dbReference type="PROSITE" id="PS50975">
    <property type="entry name" value="ATP_GRASP"/>
    <property type="match status" value="1"/>
</dbReference>
<dbReference type="PROSITE" id="PS00184">
    <property type="entry name" value="GARS"/>
    <property type="match status" value="1"/>
</dbReference>
<dbReference type="PROSITE" id="PS00373">
    <property type="entry name" value="GART"/>
    <property type="match status" value="1"/>
</dbReference>
<evidence type="ECO:0000250" key="1">
    <source>
        <dbReference type="UniProtKB" id="P08179"/>
    </source>
</evidence>
<evidence type="ECO:0000250" key="2">
    <source>
        <dbReference type="UniProtKB" id="P15640"/>
    </source>
</evidence>
<evidence type="ECO:0000250" key="3">
    <source>
        <dbReference type="UniProtKB" id="P22102"/>
    </source>
</evidence>
<evidence type="ECO:0000255" key="4">
    <source>
        <dbReference type="PROSITE-ProRule" id="PRU00409"/>
    </source>
</evidence>
<evidence type="ECO:0000256" key="5">
    <source>
        <dbReference type="SAM" id="MobiDB-lite"/>
    </source>
</evidence>
<evidence type="ECO:0000305" key="6"/>
<evidence type="ECO:0000305" key="7">
    <source>
    </source>
</evidence>